<accession>Q59012</accession>
<dbReference type="EMBL" id="L77117">
    <property type="protein sequence ID" value="AAB99646.1"/>
    <property type="molecule type" value="Genomic_DNA"/>
</dbReference>
<dbReference type="PIR" id="H64501">
    <property type="entry name" value="H64501"/>
</dbReference>
<dbReference type="SMR" id="Q59012"/>
<dbReference type="STRING" id="243232.MJ_1617"/>
<dbReference type="PaxDb" id="243232-MJ_1617"/>
<dbReference type="EnsemblBacteria" id="AAB99646">
    <property type="protein sequence ID" value="AAB99646"/>
    <property type="gene ID" value="MJ_1617"/>
</dbReference>
<dbReference type="KEGG" id="mja:MJ_1617"/>
<dbReference type="eggNOG" id="arCOG02717">
    <property type="taxonomic scope" value="Archaea"/>
</dbReference>
<dbReference type="HOGENOM" id="CLU_149108_3_0_2"/>
<dbReference type="InParanoid" id="Q59012"/>
<dbReference type="PhylomeDB" id="Q59012"/>
<dbReference type="Proteomes" id="UP000000805">
    <property type="component" value="Chromosome"/>
</dbReference>
<dbReference type="GO" id="GO:0005886">
    <property type="term" value="C:plasma membrane"/>
    <property type="evidence" value="ECO:0007669"/>
    <property type="project" value="UniProtKB-SubCell"/>
</dbReference>
<dbReference type="InterPro" id="IPR002849">
    <property type="entry name" value="DUF131"/>
</dbReference>
<dbReference type="NCBIfam" id="TIGR00304">
    <property type="entry name" value="TIGR00304 family membrane protein"/>
    <property type="match status" value="1"/>
</dbReference>
<dbReference type="Pfam" id="PF01998">
    <property type="entry name" value="DUF131"/>
    <property type="match status" value="1"/>
</dbReference>
<name>Y1617_METJA</name>
<organism>
    <name type="scientific">Methanocaldococcus jannaschii (strain ATCC 43067 / DSM 2661 / JAL-1 / JCM 10045 / NBRC 100440)</name>
    <name type="common">Methanococcus jannaschii</name>
    <dbReference type="NCBI Taxonomy" id="243232"/>
    <lineage>
        <taxon>Archaea</taxon>
        <taxon>Methanobacteriati</taxon>
        <taxon>Methanobacteriota</taxon>
        <taxon>Methanomada group</taxon>
        <taxon>Methanococci</taxon>
        <taxon>Methanococcales</taxon>
        <taxon>Methanocaldococcaceae</taxon>
        <taxon>Methanocaldococcus</taxon>
    </lineage>
</organism>
<reference key="1">
    <citation type="journal article" date="1996" name="Science">
        <title>Complete genome sequence of the methanogenic archaeon, Methanococcus jannaschii.</title>
        <authorList>
            <person name="Bult C.J."/>
            <person name="White O."/>
            <person name="Olsen G.J."/>
            <person name="Zhou L."/>
            <person name="Fleischmann R.D."/>
            <person name="Sutton G.G."/>
            <person name="Blake J.A."/>
            <person name="FitzGerald L.M."/>
            <person name="Clayton R.A."/>
            <person name="Gocayne J.D."/>
            <person name="Kerlavage A.R."/>
            <person name="Dougherty B.A."/>
            <person name="Tomb J.-F."/>
            <person name="Adams M.D."/>
            <person name="Reich C.I."/>
            <person name="Overbeek R."/>
            <person name="Kirkness E.F."/>
            <person name="Weinstock K.G."/>
            <person name="Merrick J.M."/>
            <person name="Glodek A."/>
            <person name="Scott J.L."/>
            <person name="Geoghagen N.S.M."/>
            <person name="Weidman J.F."/>
            <person name="Fuhrmann J.L."/>
            <person name="Nguyen D."/>
            <person name="Utterback T.R."/>
            <person name="Kelley J.M."/>
            <person name="Peterson J.D."/>
            <person name="Sadow P.W."/>
            <person name="Hanna M.C."/>
            <person name="Cotton M.D."/>
            <person name="Roberts K.M."/>
            <person name="Hurst M.A."/>
            <person name="Kaine B.P."/>
            <person name="Borodovsky M."/>
            <person name="Klenk H.-P."/>
            <person name="Fraser C.M."/>
            <person name="Smith H.O."/>
            <person name="Woese C.R."/>
            <person name="Venter J.C."/>
        </authorList>
    </citation>
    <scope>NUCLEOTIDE SEQUENCE [LARGE SCALE GENOMIC DNA]</scope>
    <source>
        <strain>ATCC 43067 / DSM 2661 / JAL-1 / JCM 10045 / NBRC 100440</strain>
    </source>
</reference>
<keyword id="KW-1003">Cell membrane</keyword>
<keyword id="KW-0472">Membrane</keyword>
<keyword id="KW-1185">Reference proteome</keyword>
<keyword id="KW-0812">Transmembrane</keyword>
<keyword id="KW-1133">Transmembrane helix</keyword>
<evidence type="ECO:0000255" key="1"/>
<evidence type="ECO:0000305" key="2"/>
<sequence length="93" mass="10461">MIMKPILIFLGIILMFIGFFMITLGMILPSSQENYEKPETEKTESSVEYSGIVMIGPIPIVFGNSPGLMILSVLIAILMIIWMFLFAFGIRIK</sequence>
<proteinExistence type="predicted"/>
<protein>
    <recommendedName>
        <fullName>Uncharacterized protein MJ1617</fullName>
    </recommendedName>
</protein>
<gene>
    <name type="ordered locus">MJ1617</name>
</gene>
<comment type="subcellular location">
    <subcellularLocation>
        <location evidence="2">Cell membrane</location>
        <topology evidence="2">Multi-pass membrane protein</topology>
    </subcellularLocation>
</comment>
<feature type="chain" id="PRO_0000107439" description="Uncharacterized protein MJ1617">
    <location>
        <begin position="1"/>
        <end position="93"/>
    </location>
</feature>
<feature type="transmembrane region" description="Helical" evidence="1">
    <location>
        <begin position="7"/>
        <end position="27"/>
    </location>
</feature>
<feature type="transmembrane region" description="Helical" evidence="1">
    <location>
        <begin position="70"/>
        <end position="90"/>
    </location>
</feature>